<keyword id="KW-0378">Hydrolase</keyword>
<keyword id="KW-0479">Metal-binding</keyword>
<keyword id="KW-0660">Purine salvage</keyword>
<keyword id="KW-0862">Zinc</keyword>
<dbReference type="EC" id="3.5.4.4" evidence="2"/>
<dbReference type="EMBL" id="KP164513">
    <property type="protein sequence ID" value="AKV72186.1"/>
    <property type="molecule type" value="mRNA"/>
</dbReference>
<dbReference type="EMBL" id="CVMV01000096">
    <property type="protein sequence ID" value="CRG97310.1"/>
    <property type="status" value="ALT_INIT"/>
    <property type="molecule type" value="Genomic_DNA"/>
</dbReference>
<dbReference type="SMR" id="A0A0K1SC59"/>
<dbReference type="VEuPathDB" id="PlasmoDB:PGAL8A_00488900"/>
<dbReference type="UniPathway" id="UPA00606"/>
<dbReference type="Proteomes" id="UP000220797">
    <property type="component" value="Unassembled WGS sequence"/>
</dbReference>
<dbReference type="GO" id="GO:0005829">
    <property type="term" value="C:cytosol"/>
    <property type="evidence" value="ECO:0007669"/>
    <property type="project" value="TreeGrafter"/>
</dbReference>
<dbReference type="GO" id="GO:0009897">
    <property type="term" value="C:external side of plasma membrane"/>
    <property type="evidence" value="ECO:0007669"/>
    <property type="project" value="TreeGrafter"/>
</dbReference>
<dbReference type="GO" id="GO:0004000">
    <property type="term" value="F:adenosine deaminase activity"/>
    <property type="evidence" value="ECO:0000314"/>
    <property type="project" value="UniProtKB"/>
</dbReference>
<dbReference type="GO" id="GO:0046872">
    <property type="term" value="F:metal ion binding"/>
    <property type="evidence" value="ECO:0007669"/>
    <property type="project" value="UniProtKB-KW"/>
</dbReference>
<dbReference type="GO" id="GO:0006154">
    <property type="term" value="P:adenosine catabolic process"/>
    <property type="evidence" value="ECO:0007669"/>
    <property type="project" value="TreeGrafter"/>
</dbReference>
<dbReference type="GO" id="GO:0043103">
    <property type="term" value="P:hypoxanthine salvage"/>
    <property type="evidence" value="ECO:0007669"/>
    <property type="project" value="TreeGrafter"/>
</dbReference>
<dbReference type="GO" id="GO:0046103">
    <property type="term" value="P:inosine biosynthetic process"/>
    <property type="evidence" value="ECO:0007669"/>
    <property type="project" value="TreeGrafter"/>
</dbReference>
<dbReference type="GO" id="GO:0060169">
    <property type="term" value="P:negative regulation of adenosine receptor signaling pathway"/>
    <property type="evidence" value="ECO:0007669"/>
    <property type="project" value="TreeGrafter"/>
</dbReference>
<dbReference type="GO" id="GO:0009168">
    <property type="term" value="P:purine ribonucleoside monophosphate biosynthetic process"/>
    <property type="evidence" value="ECO:0007669"/>
    <property type="project" value="InterPro"/>
</dbReference>
<dbReference type="GO" id="GO:0006166">
    <property type="term" value="P:purine ribonucleoside salvage"/>
    <property type="evidence" value="ECO:0007669"/>
    <property type="project" value="UniProtKB-KW"/>
</dbReference>
<dbReference type="Gene3D" id="3.20.20.140">
    <property type="entry name" value="Metal-dependent hydrolases"/>
    <property type="match status" value="1"/>
</dbReference>
<dbReference type="InterPro" id="IPR006650">
    <property type="entry name" value="A/AMP_deam_AS"/>
</dbReference>
<dbReference type="InterPro" id="IPR001365">
    <property type="entry name" value="A_deaminase_dom"/>
</dbReference>
<dbReference type="InterPro" id="IPR006330">
    <property type="entry name" value="Ado/ade_deaminase"/>
</dbReference>
<dbReference type="InterPro" id="IPR032466">
    <property type="entry name" value="Metal_Hydrolase"/>
</dbReference>
<dbReference type="NCBIfam" id="TIGR01430">
    <property type="entry name" value="aden_deam"/>
    <property type="match status" value="1"/>
</dbReference>
<dbReference type="PANTHER" id="PTHR11409">
    <property type="entry name" value="ADENOSINE DEAMINASE"/>
    <property type="match status" value="1"/>
</dbReference>
<dbReference type="PANTHER" id="PTHR11409:SF43">
    <property type="entry name" value="ADENOSINE DEAMINASE"/>
    <property type="match status" value="1"/>
</dbReference>
<dbReference type="Pfam" id="PF00962">
    <property type="entry name" value="A_deaminase"/>
    <property type="match status" value="1"/>
</dbReference>
<dbReference type="SUPFAM" id="SSF51556">
    <property type="entry name" value="Metallo-dependent hydrolases"/>
    <property type="match status" value="1"/>
</dbReference>
<dbReference type="PROSITE" id="PS00485">
    <property type="entry name" value="A_DEAMINASE"/>
    <property type="match status" value="1"/>
</dbReference>
<sequence length="362" mass="42492">MTILHEEINFLKKDELNINLKCLDKKERYKIWRRIPKCELHCHLDLCFSLEFFLKCVRKYNLQPDLTDDEVVDYYLFKDKGKSLNEFIERSRRVTDIFINYDIIKDIAKNAVFNKYKEGVILIEFRYSPSYIAYKYNLCIDLIHKTIVEGINEAVEKLNHKIHVGLICIGETGISEESLRKAAEFCVKNKKDFVGFDHAGHERDLKPYKEIYDYVRENGIPLTIHAGEDLTLPNLNTIYSAIEVLKAKRIGHGIRVIESEDLINLIKKNDILLEICPISNLLLNNVKSMDTHPIKKLYDSGIKVSVNTDDPGMFLTEINDEYEELYLNLNFNLEDFMKMNLWALEKSFVKSEIKDKLKKLYF</sequence>
<organism evidence="6">
    <name type="scientific">Plasmodium gallinaceum</name>
    <dbReference type="NCBI Taxonomy" id="5849"/>
    <lineage>
        <taxon>Eukaryota</taxon>
        <taxon>Sar</taxon>
        <taxon>Alveolata</taxon>
        <taxon>Apicomplexa</taxon>
        <taxon>Aconoidasida</taxon>
        <taxon>Haemosporida</taxon>
        <taxon>Plasmodiidae</taxon>
        <taxon>Plasmodium</taxon>
        <taxon>Plasmodium (Haemamoeba)</taxon>
    </lineage>
</organism>
<name>ADA_PLAGA</name>
<protein>
    <recommendedName>
        <fullName evidence="3">Adenosine deaminase</fullName>
        <ecNumber evidence="2">3.5.4.4</ecNumber>
    </recommendedName>
</protein>
<accession>A0A0K1SC59</accession>
<accession>A0A1J1H1V6</accession>
<proteinExistence type="evidence at protein level"/>
<gene>
    <name evidence="5" type="primary">ADA</name>
</gene>
<evidence type="ECO:0000250" key="1">
    <source>
        <dbReference type="UniProtKB" id="A5KE01"/>
    </source>
</evidence>
<evidence type="ECO:0000269" key="2">
    <source>
    </source>
</evidence>
<evidence type="ECO:0000305" key="3"/>
<evidence type="ECO:0000305" key="4">
    <source>
    </source>
</evidence>
<evidence type="ECO:0000312" key="5">
    <source>
        <dbReference type="EMBL" id="AKV72186.1"/>
    </source>
</evidence>
<evidence type="ECO:0000312" key="6">
    <source>
        <dbReference type="Proteomes" id="UP000220797"/>
    </source>
</evidence>
<reference evidence="5" key="1">
    <citation type="journal article" date="2015" name="Malar. J.">
        <title>De novo assembly and transcriptome analysis of Plasmodium gallinaceum identifies the Rh5 interacting protein (ripr), and reveals a lack of EBL and RH gene family diversification.</title>
        <authorList>
            <person name="Lauron E.J."/>
            <person name="Aw Yeang H.X."/>
            <person name="Taffner S.M."/>
            <person name="Sehgal R.N."/>
        </authorList>
    </citation>
    <scope>NUCLEOTIDE SEQUENCE [MRNA]</scope>
</reference>
<reference evidence="6" key="2">
    <citation type="submission" date="2015-04" db="EMBL/GenBank/DDBJ databases">
        <authorList>
            <consortium name="Pathogen Informatics"/>
        </authorList>
    </citation>
    <scope>NUCLEOTIDE SEQUENCE [LARGE SCALE GENOMIC DNA]</scope>
    <source>
        <strain evidence="6">8A</strain>
    </source>
</reference>
<reference evidence="3" key="3">
    <citation type="journal article" date="2009" name="Biochemistry">
        <title>Structural and metabolic specificity of methylthiocoformycin for malarial adenosine deaminases.</title>
        <authorList>
            <person name="Ho M.C."/>
            <person name="Cassera M.B."/>
            <person name="Madrid D.C."/>
            <person name="Ting L.M."/>
            <person name="Tyler P.C."/>
            <person name="Kim K."/>
            <person name="Almo S.C."/>
            <person name="Schramm V.L."/>
        </authorList>
    </citation>
    <scope>FUNCTION</scope>
    <scope>CATALYTIC ACTIVITY</scope>
    <scope>ACTIVITY REGULATION</scope>
    <scope>BIOPHYSICOCHEMICAL PROPERTIES</scope>
    <scope>PATHWAY</scope>
</reference>
<comment type="function">
    <text evidence="2 4">Catalyzes the hydrolytic deamination of adenosine to produce inosine (PubMed:19728741). Unlike other Plasmodium adenosine deaminases, does not catalyze the deamination of 5'-methylthioadenosine (MTA) (PubMed:19728741). Plays an essential role in the purine salvage pathway which allows the parasite to use host cell purines for the synthesis of nucleic acids (Probable).</text>
</comment>
<comment type="catalytic activity">
    <reaction evidence="2">
        <text>adenosine + H2O + H(+) = inosine + NH4(+)</text>
        <dbReference type="Rhea" id="RHEA:24408"/>
        <dbReference type="ChEBI" id="CHEBI:15377"/>
        <dbReference type="ChEBI" id="CHEBI:15378"/>
        <dbReference type="ChEBI" id="CHEBI:16335"/>
        <dbReference type="ChEBI" id="CHEBI:17596"/>
        <dbReference type="ChEBI" id="CHEBI:28938"/>
        <dbReference type="EC" id="3.5.4.4"/>
    </reaction>
</comment>
<comment type="cofactor">
    <cofactor evidence="1">
        <name>Zn(2+)</name>
        <dbReference type="ChEBI" id="CHEBI:29105"/>
    </cofactor>
    <text evidence="1">Binds 1 zinc ion per subunit.</text>
</comment>
<comment type="activity regulation">
    <text evidence="2">Inhibited by coformycin but not by methylthiocoformycin (MT-coformycin).</text>
</comment>
<comment type="biophysicochemical properties">
    <kinetics>
        <KM evidence="2">32 uM for adenosine (at pH 8)</KM>
        <text evidence="2">kcat is 1.9 sec(-1) with adenosine as substrate.</text>
    </kinetics>
</comment>
<comment type="pathway">
    <text evidence="4">Purine metabolism; purine nucleoside salvage.</text>
</comment>
<comment type="similarity">
    <text evidence="3">Belongs to the metallo-dependent hydrolases superfamily. Adenosine and AMP deaminases family.</text>
</comment>
<comment type="caution">
    <text evidence="2">Unlike other Plasmodium adenosine deaminases, lacks S-methyl-5'-thioadenosine deaminase activity due to the presence of a Glu residue at position 171 instead of an Asp residue.</text>
</comment>
<comment type="sequence caution" evidence="3">
    <conflict type="erroneous initiation">
        <sequence resource="EMBL-CDS" id="CRG97310"/>
    </conflict>
    <text>Extended N-terminus.</text>
</comment>
<feature type="chain" id="PRO_0000451866" description="Adenosine deaminase">
    <location>
        <begin position="1"/>
        <end position="362"/>
    </location>
</feature>
<feature type="region of interest" description="Gating helix loop; regulates binding affinity for substrates and thus substrate selectivity" evidence="1">
    <location>
        <begin position="169"/>
        <end position="183"/>
    </location>
</feature>
<feature type="binding site" evidence="1">
    <location>
        <position position="41"/>
    </location>
    <ligand>
        <name>Zn(2+)</name>
        <dbReference type="ChEBI" id="CHEBI:29105"/>
        <note>catalytic</note>
    </ligand>
</feature>
<feature type="binding site" evidence="1">
    <location>
        <begin position="43"/>
        <end position="45"/>
    </location>
    <ligand>
        <name>a purine D-ribonucleoside</name>
        <dbReference type="ChEBI" id="CHEBI:142355"/>
    </ligand>
</feature>
<feature type="binding site" evidence="1">
    <location>
        <position position="43"/>
    </location>
    <ligand>
        <name>Zn(2+)</name>
        <dbReference type="ChEBI" id="CHEBI:29105"/>
        <note>catalytic</note>
    </ligand>
</feature>
<feature type="binding site" evidence="1">
    <location>
        <position position="200"/>
    </location>
    <ligand>
        <name>a purine D-ribonucleoside</name>
        <dbReference type="ChEBI" id="CHEBI:142355"/>
    </ligand>
</feature>
<feature type="binding site" evidence="1">
    <location>
        <position position="225"/>
    </location>
    <ligand>
        <name>Zn(2+)</name>
        <dbReference type="ChEBI" id="CHEBI:29105"/>
        <note>catalytic</note>
    </ligand>
</feature>
<feature type="binding site" evidence="1">
    <location>
        <position position="228"/>
    </location>
    <ligand>
        <name>a purine D-ribonucleoside</name>
        <dbReference type="ChEBI" id="CHEBI:142355"/>
    </ligand>
</feature>
<feature type="binding site" evidence="1">
    <location>
        <position position="252"/>
    </location>
    <ligand>
        <name>a purine D-ribonucleoside</name>
        <dbReference type="ChEBI" id="CHEBI:142355"/>
    </ligand>
</feature>
<feature type="binding site" evidence="1">
    <location>
        <position position="309"/>
    </location>
    <ligand>
        <name>a purine D-ribonucleoside</name>
        <dbReference type="ChEBI" id="CHEBI:142355"/>
    </ligand>
</feature>
<feature type="binding site" evidence="1">
    <location>
        <position position="309"/>
    </location>
    <ligand>
        <name>Zn(2+)</name>
        <dbReference type="ChEBI" id="CHEBI:29105"/>
        <note>catalytic</note>
    </ligand>
</feature>